<reference key="1">
    <citation type="journal article" date="2011" name="Stand. Genomic Sci.">
        <title>Complete genome sequence of the halophilic and highly halotolerant Chromohalobacter salexigens type strain (1H11(T)).</title>
        <authorList>
            <person name="Copeland A."/>
            <person name="O'Connor K."/>
            <person name="Lucas S."/>
            <person name="Lapidus A."/>
            <person name="Berry K.W."/>
            <person name="Detter J.C."/>
            <person name="Del Rio T.G."/>
            <person name="Hammon N."/>
            <person name="Dalin E."/>
            <person name="Tice H."/>
            <person name="Pitluck S."/>
            <person name="Bruce D."/>
            <person name="Goodwin L."/>
            <person name="Han C."/>
            <person name="Tapia R."/>
            <person name="Saunders E."/>
            <person name="Schmutz J."/>
            <person name="Brettin T."/>
            <person name="Larimer F."/>
            <person name="Land M."/>
            <person name="Hauser L."/>
            <person name="Vargas C."/>
            <person name="Nieto J.J."/>
            <person name="Kyrpides N.C."/>
            <person name="Ivanova N."/>
            <person name="Goker M."/>
            <person name="Klenk H.P."/>
            <person name="Csonka L.N."/>
            <person name="Woyke T."/>
        </authorList>
    </citation>
    <scope>NUCLEOTIDE SEQUENCE [LARGE SCALE GENOMIC DNA]</scope>
    <source>
        <strain>ATCC BAA-138 / DSM 3043 / CIP 106854 / NCIMB 13768 / 1H11</strain>
    </source>
</reference>
<feature type="chain" id="PRO_1000128362" description="Small ribosomal subunit protein uS14">
    <location>
        <begin position="1"/>
        <end position="101"/>
    </location>
</feature>
<protein>
    <recommendedName>
        <fullName evidence="1">Small ribosomal subunit protein uS14</fullName>
    </recommendedName>
    <alternativeName>
        <fullName evidence="2">30S ribosomal protein S14</fullName>
    </alternativeName>
</protein>
<dbReference type="EMBL" id="CP000285">
    <property type="protein sequence ID" value="ABE57796.1"/>
    <property type="molecule type" value="Genomic_DNA"/>
</dbReference>
<dbReference type="RefSeq" id="WP_011505742.1">
    <property type="nucleotide sequence ID" value="NC_007963.1"/>
</dbReference>
<dbReference type="SMR" id="Q1R0G2"/>
<dbReference type="STRING" id="290398.Csal_0434"/>
<dbReference type="GeneID" id="95333187"/>
<dbReference type="KEGG" id="csa:Csal_0434"/>
<dbReference type="eggNOG" id="COG0199">
    <property type="taxonomic scope" value="Bacteria"/>
</dbReference>
<dbReference type="HOGENOM" id="CLU_139869_0_1_6"/>
<dbReference type="OrthoDB" id="9810484at2"/>
<dbReference type="Proteomes" id="UP000000239">
    <property type="component" value="Chromosome"/>
</dbReference>
<dbReference type="GO" id="GO:0005737">
    <property type="term" value="C:cytoplasm"/>
    <property type="evidence" value="ECO:0007669"/>
    <property type="project" value="UniProtKB-ARBA"/>
</dbReference>
<dbReference type="GO" id="GO:0015935">
    <property type="term" value="C:small ribosomal subunit"/>
    <property type="evidence" value="ECO:0007669"/>
    <property type="project" value="TreeGrafter"/>
</dbReference>
<dbReference type="GO" id="GO:0019843">
    <property type="term" value="F:rRNA binding"/>
    <property type="evidence" value="ECO:0007669"/>
    <property type="project" value="UniProtKB-UniRule"/>
</dbReference>
<dbReference type="GO" id="GO:0003735">
    <property type="term" value="F:structural constituent of ribosome"/>
    <property type="evidence" value="ECO:0007669"/>
    <property type="project" value="InterPro"/>
</dbReference>
<dbReference type="GO" id="GO:0006412">
    <property type="term" value="P:translation"/>
    <property type="evidence" value="ECO:0007669"/>
    <property type="project" value="UniProtKB-UniRule"/>
</dbReference>
<dbReference type="FunFam" id="1.10.287.1480:FF:000001">
    <property type="entry name" value="30S ribosomal protein S14"/>
    <property type="match status" value="1"/>
</dbReference>
<dbReference type="Gene3D" id="1.10.287.1480">
    <property type="match status" value="1"/>
</dbReference>
<dbReference type="HAMAP" id="MF_00537">
    <property type="entry name" value="Ribosomal_uS14_1"/>
    <property type="match status" value="1"/>
</dbReference>
<dbReference type="InterPro" id="IPR001209">
    <property type="entry name" value="Ribosomal_uS14"/>
</dbReference>
<dbReference type="InterPro" id="IPR023036">
    <property type="entry name" value="Ribosomal_uS14_bac/plastid"/>
</dbReference>
<dbReference type="NCBIfam" id="NF006477">
    <property type="entry name" value="PRK08881.1"/>
    <property type="match status" value="1"/>
</dbReference>
<dbReference type="PANTHER" id="PTHR19836">
    <property type="entry name" value="30S RIBOSOMAL PROTEIN S14"/>
    <property type="match status" value="1"/>
</dbReference>
<dbReference type="PANTHER" id="PTHR19836:SF19">
    <property type="entry name" value="SMALL RIBOSOMAL SUBUNIT PROTEIN US14M"/>
    <property type="match status" value="1"/>
</dbReference>
<dbReference type="Pfam" id="PF00253">
    <property type="entry name" value="Ribosomal_S14"/>
    <property type="match status" value="1"/>
</dbReference>
<dbReference type="SUPFAM" id="SSF57716">
    <property type="entry name" value="Glucocorticoid receptor-like (DNA-binding domain)"/>
    <property type="match status" value="1"/>
</dbReference>
<evidence type="ECO:0000255" key="1">
    <source>
        <dbReference type="HAMAP-Rule" id="MF_00537"/>
    </source>
</evidence>
<evidence type="ECO:0000305" key="2"/>
<keyword id="KW-1185">Reference proteome</keyword>
<keyword id="KW-0687">Ribonucleoprotein</keyword>
<keyword id="KW-0689">Ribosomal protein</keyword>
<keyword id="KW-0694">RNA-binding</keyword>
<keyword id="KW-0699">rRNA-binding</keyword>
<accession>Q1R0G2</accession>
<sequence length="101" mass="11691">MAKKSMIERELKRAKLVDKYAAKRAELKAIIYDVNASDEERFDAQLKLQQLPRDSSPVRQRNRCRVTGRPHGFYNKFGLGRNKLREAAMRGDVPGLKKSSW</sequence>
<organism>
    <name type="scientific">Chromohalobacter salexigens (strain ATCC BAA-138 / DSM 3043 / CIP 106854 / NCIMB 13768 / 1H11)</name>
    <dbReference type="NCBI Taxonomy" id="290398"/>
    <lineage>
        <taxon>Bacteria</taxon>
        <taxon>Pseudomonadati</taxon>
        <taxon>Pseudomonadota</taxon>
        <taxon>Gammaproteobacteria</taxon>
        <taxon>Oceanospirillales</taxon>
        <taxon>Halomonadaceae</taxon>
        <taxon>Chromohalobacter</taxon>
    </lineage>
</organism>
<gene>
    <name evidence="1" type="primary">rpsN</name>
    <name type="ordered locus">Csal_0434</name>
</gene>
<proteinExistence type="inferred from homology"/>
<name>RS14_CHRSD</name>
<comment type="function">
    <text evidence="1">Binds 16S rRNA, required for the assembly of 30S particles and may also be responsible for determining the conformation of the 16S rRNA at the A site.</text>
</comment>
<comment type="subunit">
    <text evidence="1">Part of the 30S ribosomal subunit. Contacts proteins S3 and S10.</text>
</comment>
<comment type="similarity">
    <text evidence="1">Belongs to the universal ribosomal protein uS14 family.</text>
</comment>